<gene>
    <name type="ordered locus">TC_0305</name>
</gene>
<reference key="1">
    <citation type="journal article" date="2000" name="Nucleic Acids Res.">
        <title>Genome sequences of Chlamydia trachomatis MoPn and Chlamydia pneumoniae AR39.</title>
        <authorList>
            <person name="Read T.D."/>
            <person name="Brunham R.C."/>
            <person name="Shen C."/>
            <person name="Gill S.R."/>
            <person name="Heidelberg J.F."/>
            <person name="White O."/>
            <person name="Hickey E.K."/>
            <person name="Peterson J.D."/>
            <person name="Utterback T.R."/>
            <person name="Berry K.J."/>
            <person name="Bass S."/>
            <person name="Linher K.D."/>
            <person name="Weidman J.F."/>
            <person name="Khouri H.M."/>
            <person name="Craven B."/>
            <person name="Bowman C."/>
            <person name="Dodson R.J."/>
            <person name="Gwinn M.L."/>
            <person name="Nelson W.C."/>
            <person name="DeBoy R.T."/>
            <person name="Kolonay J.F."/>
            <person name="McClarty G."/>
            <person name="Salzberg S.L."/>
            <person name="Eisen J.A."/>
            <person name="Fraser C.M."/>
        </authorList>
    </citation>
    <scope>NUCLEOTIDE SEQUENCE [LARGE SCALE GENOMIC DNA]</scope>
    <source>
        <strain>MoPn / Nigg</strain>
    </source>
</reference>
<organism>
    <name type="scientific">Chlamydia muridarum (strain MoPn / Nigg)</name>
    <dbReference type="NCBI Taxonomy" id="243161"/>
    <lineage>
        <taxon>Bacteria</taxon>
        <taxon>Pseudomonadati</taxon>
        <taxon>Chlamydiota</taxon>
        <taxon>Chlamydiia</taxon>
        <taxon>Chlamydiales</taxon>
        <taxon>Chlamydiaceae</taxon>
        <taxon>Chlamydia/Chlamydophila group</taxon>
        <taxon>Chlamydia</taxon>
    </lineage>
</organism>
<evidence type="ECO:0000305" key="1"/>
<feature type="chain" id="PRO_0000218360" description="Uncharacterized protein TC_0305">
    <location>
        <begin position="1"/>
        <end position="259"/>
    </location>
</feature>
<protein>
    <recommendedName>
        <fullName>Uncharacterized protein TC_0305</fullName>
    </recommendedName>
</protein>
<name>Y305_CHLMU</name>
<proteinExistence type="inferred from homology"/>
<comment type="similarity">
    <text evidence="1">Belongs to the chlamydial CPn_0128/CT_035/TC_0305 family.</text>
</comment>
<sequence>MNMQRILVYSDKGVSPYYLRHTVRWLKQAAFPFQMEVCRVNGQFLIHEPLWEETTQLLVIPGGADVPYHHVLHGLGTARIDNYVREGGAYLGICAGAYFGCAHFSFLEPNGSLLVAKRDLGFFPGMANGPAYDSAFSYTSSSGVLAASLRFTDFPGKSFALFNGGCYFENAEDFSEVRVEARYNDLPGSPAAIISRRLDRGLVVLSGPHIEYLPEFCSLQEENVVHAREQIAKNSAGLEEYKQTLIKRLLSNVVEHVLY</sequence>
<accession>Q9PL03</accession>
<dbReference type="EMBL" id="AE002160">
    <property type="protein sequence ID" value="AAF39170.1"/>
    <property type="molecule type" value="Genomic_DNA"/>
</dbReference>
<dbReference type="PIR" id="H81716">
    <property type="entry name" value="H81716"/>
</dbReference>
<dbReference type="KEGG" id="cmu:TC_0305"/>
<dbReference type="eggNOG" id="COG4285">
    <property type="taxonomic scope" value="Bacteria"/>
</dbReference>
<dbReference type="HOGENOM" id="CLU_006150_0_0_0"/>
<dbReference type="Proteomes" id="UP000000800">
    <property type="component" value="Chromosome"/>
</dbReference>
<dbReference type="CDD" id="cd03144">
    <property type="entry name" value="GATase1_ScBLP_like"/>
    <property type="match status" value="1"/>
</dbReference>
<dbReference type="Gene3D" id="3.40.50.880">
    <property type="match status" value="1"/>
</dbReference>
<dbReference type="InterPro" id="IPR019197">
    <property type="entry name" value="Biotin-prot_ligase_N"/>
</dbReference>
<dbReference type="InterPro" id="IPR029062">
    <property type="entry name" value="Class_I_gatase-like"/>
</dbReference>
<dbReference type="InterPro" id="IPR015834">
    <property type="entry name" value="UCP016642"/>
</dbReference>
<dbReference type="Pfam" id="PF09825">
    <property type="entry name" value="BPL_N"/>
    <property type="match status" value="1"/>
</dbReference>
<dbReference type="PIRSF" id="PIRSF016642">
    <property type="entry name" value="UCP016642"/>
    <property type="match status" value="1"/>
</dbReference>
<dbReference type="SUPFAM" id="SSF52317">
    <property type="entry name" value="Class I glutamine amidotransferase-like"/>
    <property type="match status" value="1"/>
</dbReference>